<protein>
    <recommendedName>
        <fullName>Uncharacterized RNA methyltransferase BR0438/BS1330_I0439</fullName>
        <ecNumber>2.1.1.-</ecNumber>
    </recommendedName>
</protein>
<gene>
    <name type="ordered locus">BR0438</name>
    <name type="ordered locus">BS1330_I0439</name>
</gene>
<name>Y438_BRUSU</name>
<comment type="similarity">
    <text evidence="2">Belongs to the class I-like SAM-binding methyltransferase superfamily. RNA M5U methyltransferase family.</text>
</comment>
<keyword id="KW-0004">4Fe-4S</keyword>
<keyword id="KW-0408">Iron</keyword>
<keyword id="KW-0411">Iron-sulfur</keyword>
<keyword id="KW-0479">Metal-binding</keyword>
<keyword id="KW-0489">Methyltransferase</keyword>
<keyword id="KW-0949">S-adenosyl-L-methionine</keyword>
<keyword id="KW-0808">Transferase</keyword>
<sequence>MTSSKTGQITIRSIGAGGDGVANLPDGQIYVPFTLPGEVVNVARDKNRATLMALLEASPERQNPACRHFEDCGGCALQHWQDEPYRLWKRELVVGALKGRGIDVEVAPLVACNPHTRRRAVFAARKTEKGVLLGFNRHQSHEIIDIVECPVTVPEIIARLDDLREVGALLAPGSGPFKLAATLTESGLDLAASGCGKLNDEQRRALTALVIKKDFARLSHEGEIIVEPKKPLIHFGKVPVPVPPGCFLQATAEAEETMAALVLAHLGKARRVADLFCGVGTFALRIAEKSAVHAVENDAAALAALDRGVRHVQGLKPVSIERRDLFRRPLMPKELLPYNAVVFDPPRAGAEEQALELAKSKVEKVVAISCNPVTLARDLAILQKGGYRIERVTPIDQFLWSAHVEAVAVLTKGRQ</sequence>
<organism>
    <name type="scientific">Brucella suis biovar 1 (strain 1330)</name>
    <dbReference type="NCBI Taxonomy" id="204722"/>
    <lineage>
        <taxon>Bacteria</taxon>
        <taxon>Pseudomonadati</taxon>
        <taxon>Pseudomonadota</taxon>
        <taxon>Alphaproteobacteria</taxon>
        <taxon>Hyphomicrobiales</taxon>
        <taxon>Brucellaceae</taxon>
        <taxon>Brucella/Ochrobactrum group</taxon>
        <taxon>Brucella</taxon>
    </lineage>
</organism>
<feature type="chain" id="PRO_0000161961" description="Uncharacterized RNA methyltransferase BR0438/BS1330_I0439">
    <location>
        <begin position="1"/>
        <end position="415"/>
    </location>
</feature>
<feature type="active site" description="Nucleophile" evidence="2">
    <location>
        <position position="370"/>
    </location>
</feature>
<feature type="binding site" evidence="1">
    <location>
        <position position="66"/>
    </location>
    <ligand>
        <name>[4Fe-4S] cluster</name>
        <dbReference type="ChEBI" id="CHEBI:49883"/>
    </ligand>
</feature>
<feature type="binding site" evidence="1">
    <location>
        <position position="72"/>
    </location>
    <ligand>
        <name>[4Fe-4S] cluster</name>
        <dbReference type="ChEBI" id="CHEBI:49883"/>
    </ligand>
</feature>
<feature type="binding site" evidence="1">
    <location>
        <position position="75"/>
    </location>
    <ligand>
        <name>[4Fe-4S] cluster</name>
        <dbReference type="ChEBI" id="CHEBI:49883"/>
    </ligand>
</feature>
<feature type="binding site" evidence="1">
    <location>
        <position position="149"/>
    </location>
    <ligand>
        <name>[4Fe-4S] cluster</name>
        <dbReference type="ChEBI" id="CHEBI:49883"/>
    </ligand>
</feature>
<feature type="binding site" evidence="2">
    <location>
        <position position="249"/>
    </location>
    <ligand>
        <name>S-adenosyl-L-methionine</name>
        <dbReference type="ChEBI" id="CHEBI:59789"/>
    </ligand>
</feature>
<feature type="binding site" evidence="2">
    <location>
        <position position="276"/>
    </location>
    <ligand>
        <name>S-adenosyl-L-methionine</name>
        <dbReference type="ChEBI" id="CHEBI:59789"/>
    </ligand>
</feature>
<feature type="binding site" evidence="2">
    <location>
        <position position="296"/>
    </location>
    <ligand>
        <name>S-adenosyl-L-methionine</name>
        <dbReference type="ChEBI" id="CHEBI:59789"/>
    </ligand>
</feature>
<feature type="binding site" evidence="2">
    <location>
        <position position="344"/>
    </location>
    <ligand>
        <name>S-adenosyl-L-methionine</name>
        <dbReference type="ChEBI" id="CHEBI:59789"/>
    </ligand>
</feature>
<evidence type="ECO:0000250" key="1"/>
<evidence type="ECO:0000255" key="2">
    <source>
        <dbReference type="PROSITE-ProRule" id="PRU01024"/>
    </source>
</evidence>
<accession>Q8G290</accession>
<accession>G0K6Q7</accession>
<dbReference type="EC" id="2.1.1.-"/>
<dbReference type="EMBL" id="AE014291">
    <property type="protein sequence ID" value="AAN29381.1"/>
    <property type="molecule type" value="Genomic_DNA"/>
</dbReference>
<dbReference type="EMBL" id="CP002997">
    <property type="protein sequence ID" value="AEM17794.1"/>
    <property type="molecule type" value="Genomic_DNA"/>
</dbReference>
<dbReference type="RefSeq" id="WP_004688040.1">
    <property type="nucleotide sequence ID" value="NZ_KN046804.1"/>
</dbReference>
<dbReference type="SMR" id="Q8G290"/>
<dbReference type="KEGG" id="bms:BR0438"/>
<dbReference type="KEGG" id="bsi:BS1330_I0439"/>
<dbReference type="PATRIC" id="fig|204722.21.peg.2472"/>
<dbReference type="HOGENOM" id="CLU_014689_8_0_5"/>
<dbReference type="PhylomeDB" id="Q8G290"/>
<dbReference type="Proteomes" id="UP000007104">
    <property type="component" value="Chromosome I"/>
</dbReference>
<dbReference type="GO" id="GO:0051539">
    <property type="term" value="F:4 iron, 4 sulfur cluster binding"/>
    <property type="evidence" value="ECO:0007669"/>
    <property type="project" value="UniProtKB-KW"/>
</dbReference>
<dbReference type="GO" id="GO:0046872">
    <property type="term" value="F:metal ion binding"/>
    <property type="evidence" value="ECO:0007669"/>
    <property type="project" value="UniProtKB-KW"/>
</dbReference>
<dbReference type="GO" id="GO:0070041">
    <property type="term" value="F:rRNA (uridine-C5-)-methyltransferase activity"/>
    <property type="evidence" value="ECO:0007669"/>
    <property type="project" value="TreeGrafter"/>
</dbReference>
<dbReference type="GO" id="GO:0070475">
    <property type="term" value="P:rRNA base methylation"/>
    <property type="evidence" value="ECO:0007669"/>
    <property type="project" value="TreeGrafter"/>
</dbReference>
<dbReference type="Gene3D" id="2.40.50.1070">
    <property type="match status" value="1"/>
</dbReference>
<dbReference type="Gene3D" id="2.40.50.140">
    <property type="entry name" value="Nucleic acid-binding proteins"/>
    <property type="match status" value="1"/>
</dbReference>
<dbReference type="Gene3D" id="3.40.50.150">
    <property type="entry name" value="Vaccinia Virus protein VP39"/>
    <property type="match status" value="1"/>
</dbReference>
<dbReference type="InterPro" id="IPR030390">
    <property type="entry name" value="MeTrfase_TrmA_AS"/>
</dbReference>
<dbReference type="InterPro" id="IPR012340">
    <property type="entry name" value="NA-bd_OB-fold"/>
</dbReference>
<dbReference type="InterPro" id="IPR029063">
    <property type="entry name" value="SAM-dependent_MTases_sf"/>
</dbReference>
<dbReference type="InterPro" id="IPR010280">
    <property type="entry name" value="U5_MeTrfase_fam"/>
</dbReference>
<dbReference type="PANTHER" id="PTHR11061:SF49">
    <property type="entry name" value="23S RRNA (URACIL(1939)-C(5))-METHYLTRANSFERASE RLMD"/>
    <property type="match status" value="1"/>
</dbReference>
<dbReference type="PANTHER" id="PTHR11061">
    <property type="entry name" value="RNA M5U METHYLTRANSFERASE"/>
    <property type="match status" value="1"/>
</dbReference>
<dbReference type="Pfam" id="PF05958">
    <property type="entry name" value="tRNA_U5-meth_tr"/>
    <property type="match status" value="1"/>
</dbReference>
<dbReference type="SUPFAM" id="SSF50249">
    <property type="entry name" value="Nucleic acid-binding proteins"/>
    <property type="match status" value="1"/>
</dbReference>
<dbReference type="SUPFAM" id="SSF53335">
    <property type="entry name" value="S-adenosyl-L-methionine-dependent methyltransferases"/>
    <property type="match status" value="1"/>
</dbReference>
<dbReference type="PROSITE" id="PS51687">
    <property type="entry name" value="SAM_MT_RNA_M5U"/>
    <property type="match status" value="1"/>
</dbReference>
<dbReference type="PROSITE" id="PS01230">
    <property type="entry name" value="TRMA_1"/>
    <property type="match status" value="1"/>
</dbReference>
<reference key="1">
    <citation type="journal article" date="2002" name="Proc. Natl. Acad. Sci. U.S.A.">
        <title>The Brucella suis genome reveals fundamental similarities between animal and plant pathogens and symbionts.</title>
        <authorList>
            <person name="Paulsen I.T."/>
            <person name="Seshadri R."/>
            <person name="Nelson K.E."/>
            <person name="Eisen J.A."/>
            <person name="Heidelberg J.F."/>
            <person name="Read T.D."/>
            <person name="Dodson R.J."/>
            <person name="Umayam L.A."/>
            <person name="Brinkac L.M."/>
            <person name="Beanan M.J."/>
            <person name="Daugherty S.C."/>
            <person name="DeBoy R.T."/>
            <person name="Durkin A.S."/>
            <person name="Kolonay J.F."/>
            <person name="Madupu R."/>
            <person name="Nelson W.C."/>
            <person name="Ayodeji B."/>
            <person name="Kraul M."/>
            <person name="Shetty J."/>
            <person name="Malek J.A."/>
            <person name="Van Aken S.E."/>
            <person name="Riedmuller S."/>
            <person name="Tettelin H."/>
            <person name="Gill S.R."/>
            <person name="White O."/>
            <person name="Salzberg S.L."/>
            <person name="Hoover D.L."/>
            <person name="Lindler L.E."/>
            <person name="Halling S.M."/>
            <person name="Boyle S.M."/>
            <person name="Fraser C.M."/>
        </authorList>
    </citation>
    <scope>NUCLEOTIDE SEQUENCE [LARGE SCALE GENOMIC DNA]</scope>
    <source>
        <strain>1330</strain>
    </source>
</reference>
<reference key="2">
    <citation type="journal article" date="2011" name="J. Bacteriol.">
        <title>Revised genome sequence of Brucella suis 1330.</title>
        <authorList>
            <person name="Tae H."/>
            <person name="Shallom S."/>
            <person name="Settlage R."/>
            <person name="Preston D."/>
            <person name="Adams L.G."/>
            <person name="Garner H.R."/>
        </authorList>
    </citation>
    <scope>NUCLEOTIDE SEQUENCE [LARGE SCALE GENOMIC DNA]</scope>
    <source>
        <strain>1330</strain>
    </source>
</reference>
<proteinExistence type="inferred from homology"/>